<feature type="chain" id="PRO_1000048368" description="Glutaminase">
    <location>
        <begin position="1"/>
        <end position="308"/>
    </location>
</feature>
<feature type="binding site" evidence="1">
    <location>
        <position position="66"/>
    </location>
    <ligand>
        <name>substrate</name>
    </ligand>
</feature>
<feature type="binding site" evidence="1">
    <location>
        <position position="117"/>
    </location>
    <ligand>
        <name>substrate</name>
    </ligand>
</feature>
<feature type="binding site" evidence="1">
    <location>
        <position position="161"/>
    </location>
    <ligand>
        <name>substrate</name>
    </ligand>
</feature>
<feature type="binding site" evidence="1">
    <location>
        <position position="168"/>
    </location>
    <ligand>
        <name>substrate</name>
    </ligand>
</feature>
<feature type="binding site" evidence="1">
    <location>
        <position position="192"/>
    </location>
    <ligand>
        <name>substrate</name>
    </ligand>
</feature>
<feature type="binding site" evidence="1">
    <location>
        <position position="244"/>
    </location>
    <ligand>
        <name>substrate</name>
    </ligand>
</feature>
<feature type="binding site" evidence="1">
    <location>
        <position position="262"/>
    </location>
    <ligand>
        <name>substrate</name>
    </ligand>
</feature>
<comment type="catalytic activity">
    <reaction evidence="1">
        <text>L-glutamine + H2O = L-glutamate + NH4(+)</text>
        <dbReference type="Rhea" id="RHEA:15889"/>
        <dbReference type="ChEBI" id="CHEBI:15377"/>
        <dbReference type="ChEBI" id="CHEBI:28938"/>
        <dbReference type="ChEBI" id="CHEBI:29985"/>
        <dbReference type="ChEBI" id="CHEBI:58359"/>
        <dbReference type="EC" id="3.5.1.2"/>
    </reaction>
</comment>
<comment type="subunit">
    <text evidence="1">Homotetramer.</text>
</comment>
<comment type="similarity">
    <text evidence="1">Belongs to the glutaminase family.</text>
</comment>
<protein>
    <recommendedName>
        <fullName evidence="1">Glutaminase</fullName>
        <ecNumber evidence="1">3.5.1.2</ecNumber>
    </recommendedName>
</protein>
<organism>
    <name type="scientific">Yersinia pestis bv. Antiqua (strain Nepal516)</name>
    <dbReference type="NCBI Taxonomy" id="377628"/>
    <lineage>
        <taxon>Bacteria</taxon>
        <taxon>Pseudomonadati</taxon>
        <taxon>Pseudomonadota</taxon>
        <taxon>Gammaproteobacteria</taxon>
        <taxon>Enterobacterales</taxon>
        <taxon>Yersiniaceae</taxon>
        <taxon>Yersinia</taxon>
    </lineage>
</organism>
<name>GLSA_YERPN</name>
<dbReference type="EC" id="3.5.1.2" evidence="1"/>
<dbReference type="EMBL" id="CP000305">
    <property type="protein sequence ID" value="ABG19474.1"/>
    <property type="molecule type" value="Genomic_DNA"/>
</dbReference>
<dbReference type="EMBL" id="ACNQ01000017">
    <property type="protein sequence ID" value="EEO75643.1"/>
    <property type="molecule type" value="Genomic_DNA"/>
</dbReference>
<dbReference type="SMR" id="Q1CEV6"/>
<dbReference type="KEGG" id="ypn:YPN_3147"/>
<dbReference type="HOGENOM" id="CLU_027932_1_1_6"/>
<dbReference type="Proteomes" id="UP000008936">
    <property type="component" value="Chromosome"/>
</dbReference>
<dbReference type="GO" id="GO:0004359">
    <property type="term" value="F:glutaminase activity"/>
    <property type="evidence" value="ECO:0007669"/>
    <property type="project" value="UniProtKB-UniRule"/>
</dbReference>
<dbReference type="GO" id="GO:0006537">
    <property type="term" value="P:glutamate biosynthetic process"/>
    <property type="evidence" value="ECO:0007669"/>
    <property type="project" value="TreeGrafter"/>
</dbReference>
<dbReference type="GO" id="GO:0006543">
    <property type="term" value="P:glutamine catabolic process"/>
    <property type="evidence" value="ECO:0007669"/>
    <property type="project" value="TreeGrafter"/>
</dbReference>
<dbReference type="FunFam" id="3.40.710.10:FF:000005">
    <property type="entry name" value="Glutaminase"/>
    <property type="match status" value="1"/>
</dbReference>
<dbReference type="Gene3D" id="3.40.710.10">
    <property type="entry name" value="DD-peptidase/beta-lactamase superfamily"/>
    <property type="match status" value="1"/>
</dbReference>
<dbReference type="HAMAP" id="MF_00313">
    <property type="entry name" value="Glutaminase"/>
    <property type="match status" value="1"/>
</dbReference>
<dbReference type="InterPro" id="IPR012338">
    <property type="entry name" value="Beta-lactam/transpept-like"/>
</dbReference>
<dbReference type="InterPro" id="IPR015868">
    <property type="entry name" value="Glutaminase"/>
</dbReference>
<dbReference type="NCBIfam" id="TIGR03814">
    <property type="entry name" value="Gln_ase"/>
    <property type="match status" value="1"/>
</dbReference>
<dbReference type="NCBIfam" id="NF002132">
    <property type="entry name" value="PRK00971.1-1"/>
    <property type="match status" value="1"/>
</dbReference>
<dbReference type="NCBIfam" id="NF002133">
    <property type="entry name" value="PRK00971.1-2"/>
    <property type="match status" value="1"/>
</dbReference>
<dbReference type="PANTHER" id="PTHR12544">
    <property type="entry name" value="GLUTAMINASE"/>
    <property type="match status" value="1"/>
</dbReference>
<dbReference type="PANTHER" id="PTHR12544:SF29">
    <property type="entry name" value="GLUTAMINASE"/>
    <property type="match status" value="1"/>
</dbReference>
<dbReference type="Pfam" id="PF04960">
    <property type="entry name" value="Glutaminase"/>
    <property type="match status" value="1"/>
</dbReference>
<dbReference type="SUPFAM" id="SSF56601">
    <property type="entry name" value="beta-lactamase/transpeptidase-like"/>
    <property type="match status" value="1"/>
</dbReference>
<sequence length="308" mass="33700">MVTTLDNALLNDILQQVRPLIGQGKVADYIPALAEVPANKLGIAVCTLDGQIFQAGDADERFSIQSISKVLSLTLALSRYSEQDIWQRVGKEPSGQPFNSLVQLELEKGKPRNPFINLGALVVCDMLQSRLSAPKQRLLEVVRQLVKDDSISYDPRVARSEFEHSDRNAAIAYLMKSFGNFDNDVLTVLQTYFHYCAMRMSCVELARCFVYLANQGRSISGSESLITPMQARQINALMITSGMYDGAGEFAFRVGMPGKSGVGGGIIAIVPDEFCIAVWSPELDHAGNSLAGTAALERLAQQMGRSIF</sequence>
<evidence type="ECO:0000255" key="1">
    <source>
        <dbReference type="HAMAP-Rule" id="MF_00313"/>
    </source>
</evidence>
<accession>Q1CEV6</accession>
<accession>C4GXJ3</accession>
<gene>
    <name evidence="1" type="primary">glsA</name>
    <name type="ordered locus">YPN_3147</name>
    <name type="ORF">YP516_3574</name>
</gene>
<proteinExistence type="inferred from homology"/>
<reference key="1">
    <citation type="journal article" date="2006" name="J. Bacteriol.">
        <title>Complete genome sequence of Yersinia pestis strains Antiqua and Nepal516: evidence of gene reduction in an emerging pathogen.</title>
        <authorList>
            <person name="Chain P.S.G."/>
            <person name="Hu P."/>
            <person name="Malfatti S.A."/>
            <person name="Radnedge L."/>
            <person name="Larimer F."/>
            <person name="Vergez L.M."/>
            <person name="Worsham P."/>
            <person name="Chu M.C."/>
            <person name="Andersen G.L."/>
        </authorList>
    </citation>
    <scope>NUCLEOTIDE SEQUENCE [LARGE SCALE GENOMIC DNA]</scope>
    <source>
        <strain>Nepal516</strain>
    </source>
</reference>
<reference key="2">
    <citation type="submission" date="2009-04" db="EMBL/GenBank/DDBJ databases">
        <title>Yersinia pestis Nepal516A whole genome shotgun sequencing project.</title>
        <authorList>
            <person name="Plunkett G. III"/>
            <person name="Anderson B.D."/>
            <person name="Baumler D.J."/>
            <person name="Burland V."/>
            <person name="Cabot E.L."/>
            <person name="Glasner J.D."/>
            <person name="Mau B."/>
            <person name="Neeno-Eckwall E."/>
            <person name="Perna N.T."/>
            <person name="Munk A.C."/>
            <person name="Tapia R."/>
            <person name="Green L.D."/>
            <person name="Rogers Y.C."/>
            <person name="Detter J.C."/>
            <person name="Bruce D.C."/>
            <person name="Brettin T.S."/>
        </authorList>
    </citation>
    <scope>NUCLEOTIDE SEQUENCE [LARGE SCALE GENOMIC DNA]</scope>
    <source>
        <strain>Nepal516</strain>
    </source>
</reference>
<keyword id="KW-0378">Hydrolase</keyword>